<proteinExistence type="inferred from homology"/>
<reference key="1">
    <citation type="journal article" date="2005" name="Genome Res.">
        <title>Coping with cold: the genome of the versatile marine Antarctica bacterium Pseudoalteromonas haloplanktis TAC125.</title>
        <authorList>
            <person name="Medigue C."/>
            <person name="Krin E."/>
            <person name="Pascal G."/>
            <person name="Barbe V."/>
            <person name="Bernsel A."/>
            <person name="Bertin P.N."/>
            <person name="Cheung F."/>
            <person name="Cruveiller S."/>
            <person name="D'Amico S."/>
            <person name="Duilio A."/>
            <person name="Fang G."/>
            <person name="Feller G."/>
            <person name="Ho C."/>
            <person name="Mangenot S."/>
            <person name="Marino G."/>
            <person name="Nilsson J."/>
            <person name="Parrilli E."/>
            <person name="Rocha E.P.C."/>
            <person name="Rouy Z."/>
            <person name="Sekowska A."/>
            <person name="Tutino M.L."/>
            <person name="Vallenet D."/>
            <person name="von Heijne G."/>
            <person name="Danchin A."/>
        </authorList>
    </citation>
    <scope>NUCLEOTIDE SEQUENCE [LARGE SCALE GENOMIC DNA]</scope>
    <source>
        <strain>TAC 125</strain>
    </source>
</reference>
<gene>
    <name evidence="1" type="primary">dnaJ</name>
    <name type="ordered locus">PSHAb0358</name>
</gene>
<protein>
    <recommendedName>
        <fullName evidence="1">Chaperone protein DnaJ</fullName>
    </recommendedName>
</protein>
<accession>Q3IC07</accession>
<feature type="chain" id="PRO_1000085252" description="Chaperone protein DnaJ">
    <location>
        <begin position="1"/>
        <end position="380"/>
    </location>
</feature>
<feature type="domain" description="J" evidence="1">
    <location>
        <begin position="5"/>
        <end position="70"/>
    </location>
</feature>
<feature type="repeat" description="CXXCXGXG motif">
    <location>
        <begin position="149"/>
        <end position="156"/>
    </location>
</feature>
<feature type="repeat" description="CXXCXGXG motif">
    <location>
        <begin position="166"/>
        <end position="173"/>
    </location>
</feature>
<feature type="repeat" description="CXXCXGXG motif">
    <location>
        <begin position="188"/>
        <end position="195"/>
    </location>
</feature>
<feature type="repeat" description="CXXCXGXG motif">
    <location>
        <begin position="202"/>
        <end position="209"/>
    </location>
</feature>
<feature type="zinc finger region" description="CR-type" evidence="1">
    <location>
        <begin position="136"/>
        <end position="214"/>
    </location>
</feature>
<feature type="binding site" evidence="1">
    <location>
        <position position="149"/>
    </location>
    <ligand>
        <name>Zn(2+)</name>
        <dbReference type="ChEBI" id="CHEBI:29105"/>
        <label>1</label>
    </ligand>
</feature>
<feature type="binding site" evidence="1">
    <location>
        <position position="152"/>
    </location>
    <ligand>
        <name>Zn(2+)</name>
        <dbReference type="ChEBI" id="CHEBI:29105"/>
        <label>1</label>
    </ligand>
</feature>
<feature type="binding site" evidence="1">
    <location>
        <position position="166"/>
    </location>
    <ligand>
        <name>Zn(2+)</name>
        <dbReference type="ChEBI" id="CHEBI:29105"/>
        <label>2</label>
    </ligand>
</feature>
<feature type="binding site" evidence="1">
    <location>
        <position position="169"/>
    </location>
    <ligand>
        <name>Zn(2+)</name>
        <dbReference type="ChEBI" id="CHEBI:29105"/>
        <label>2</label>
    </ligand>
</feature>
<feature type="binding site" evidence="1">
    <location>
        <position position="188"/>
    </location>
    <ligand>
        <name>Zn(2+)</name>
        <dbReference type="ChEBI" id="CHEBI:29105"/>
        <label>2</label>
    </ligand>
</feature>
<feature type="binding site" evidence="1">
    <location>
        <position position="191"/>
    </location>
    <ligand>
        <name>Zn(2+)</name>
        <dbReference type="ChEBI" id="CHEBI:29105"/>
        <label>2</label>
    </ligand>
</feature>
<feature type="binding site" evidence="1">
    <location>
        <position position="202"/>
    </location>
    <ligand>
        <name>Zn(2+)</name>
        <dbReference type="ChEBI" id="CHEBI:29105"/>
        <label>1</label>
    </ligand>
</feature>
<feature type="binding site" evidence="1">
    <location>
        <position position="205"/>
    </location>
    <ligand>
        <name>Zn(2+)</name>
        <dbReference type="ChEBI" id="CHEBI:29105"/>
        <label>1</label>
    </ligand>
</feature>
<organism>
    <name type="scientific">Pseudoalteromonas translucida (strain TAC 125)</name>
    <dbReference type="NCBI Taxonomy" id="326442"/>
    <lineage>
        <taxon>Bacteria</taxon>
        <taxon>Pseudomonadati</taxon>
        <taxon>Pseudomonadota</taxon>
        <taxon>Gammaproteobacteria</taxon>
        <taxon>Alteromonadales</taxon>
        <taxon>Pseudoalteromonadaceae</taxon>
        <taxon>Pseudoalteromonas</taxon>
    </lineage>
</organism>
<dbReference type="EMBL" id="CR954247">
    <property type="protein sequence ID" value="CAI89397.1"/>
    <property type="molecule type" value="Genomic_DNA"/>
</dbReference>
<dbReference type="SMR" id="Q3IC07"/>
<dbReference type="STRING" id="326442.PSHAb0358"/>
<dbReference type="KEGG" id="pha:PSHAb0358"/>
<dbReference type="PATRIC" id="fig|326442.8.peg.3264"/>
<dbReference type="eggNOG" id="COG0484">
    <property type="taxonomic scope" value="Bacteria"/>
</dbReference>
<dbReference type="HOGENOM" id="CLU_017633_0_7_6"/>
<dbReference type="BioCyc" id="PHAL326442:PSHA_RS16565-MONOMER"/>
<dbReference type="Proteomes" id="UP000006843">
    <property type="component" value="Chromosome II"/>
</dbReference>
<dbReference type="GO" id="GO:0005737">
    <property type="term" value="C:cytoplasm"/>
    <property type="evidence" value="ECO:0007669"/>
    <property type="project" value="UniProtKB-SubCell"/>
</dbReference>
<dbReference type="GO" id="GO:0005524">
    <property type="term" value="F:ATP binding"/>
    <property type="evidence" value="ECO:0007669"/>
    <property type="project" value="InterPro"/>
</dbReference>
<dbReference type="GO" id="GO:0031072">
    <property type="term" value="F:heat shock protein binding"/>
    <property type="evidence" value="ECO:0007669"/>
    <property type="project" value="InterPro"/>
</dbReference>
<dbReference type="GO" id="GO:0051082">
    <property type="term" value="F:unfolded protein binding"/>
    <property type="evidence" value="ECO:0007669"/>
    <property type="project" value="UniProtKB-UniRule"/>
</dbReference>
<dbReference type="GO" id="GO:0008270">
    <property type="term" value="F:zinc ion binding"/>
    <property type="evidence" value="ECO:0007669"/>
    <property type="project" value="UniProtKB-UniRule"/>
</dbReference>
<dbReference type="GO" id="GO:0051085">
    <property type="term" value="P:chaperone cofactor-dependent protein refolding"/>
    <property type="evidence" value="ECO:0007669"/>
    <property type="project" value="TreeGrafter"/>
</dbReference>
<dbReference type="GO" id="GO:0006260">
    <property type="term" value="P:DNA replication"/>
    <property type="evidence" value="ECO:0007669"/>
    <property type="project" value="UniProtKB-KW"/>
</dbReference>
<dbReference type="GO" id="GO:0042026">
    <property type="term" value="P:protein refolding"/>
    <property type="evidence" value="ECO:0007669"/>
    <property type="project" value="TreeGrafter"/>
</dbReference>
<dbReference type="GO" id="GO:0009408">
    <property type="term" value="P:response to heat"/>
    <property type="evidence" value="ECO:0007669"/>
    <property type="project" value="InterPro"/>
</dbReference>
<dbReference type="CDD" id="cd06257">
    <property type="entry name" value="DnaJ"/>
    <property type="match status" value="1"/>
</dbReference>
<dbReference type="CDD" id="cd10747">
    <property type="entry name" value="DnaJ_C"/>
    <property type="match status" value="1"/>
</dbReference>
<dbReference type="CDD" id="cd10719">
    <property type="entry name" value="DnaJ_zf"/>
    <property type="match status" value="1"/>
</dbReference>
<dbReference type="FunFam" id="1.10.287.110:FF:000003">
    <property type="entry name" value="Molecular chaperone DnaJ"/>
    <property type="match status" value="1"/>
</dbReference>
<dbReference type="FunFam" id="2.10.230.10:FF:000002">
    <property type="entry name" value="Molecular chaperone DnaJ"/>
    <property type="match status" value="1"/>
</dbReference>
<dbReference type="FunFam" id="2.60.260.20:FF:000004">
    <property type="entry name" value="Molecular chaperone DnaJ"/>
    <property type="match status" value="1"/>
</dbReference>
<dbReference type="Gene3D" id="1.10.287.110">
    <property type="entry name" value="DnaJ domain"/>
    <property type="match status" value="1"/>
</dbReference>
<dbReference type="Gene3D" id="2.10.230.10">
    <property type="entry name" value="Heat shock protein DnaJ, cysteine-rich domain"/>
    <property type="match status" value="1"/>
</dbReference>
<dbReference type="Gene3D" id="2.60.260.20">
    <property type="entry name" value="Urease metallochaperone UreE, N-terminal domain"/>
    <property type="match status" value="2"/>
</dbReference>
<dbReference type="HAMAP" id="MF_01152">
    <property type="entry name" value="DnaJ"/>
    <property type="match status" value="1"/>
</dbReference>
<dbReference type="InterPro" id="IPR012724">
    <property type="entry name" value="DnaJ"/>
</dbReference>
<dbReference type="InterPro" id="IPR002939">
    <property type="entry name" value="DnaJ_C"/>
</dbReference>
<dbReference type="InterPro" id="IPR001623">
    <property type="entry name" value="DnaJ_domain"/>
</dbReference>
<dbReference type="InterPro" id="IPR018253">
    <property type="entry name" value="DnaJ_domain_CS"/>
</dbReference>
<dbReference type="InterPro" id="IPR008971">
    <property type="entry name" value="HSP40/DnaJ_pept-bd"/>
</dbReference>
<dbReference type="InterPro" id="IPR001305">
    <property type="entry name" value="HSP_DnaJ_Cys-rich_dom"/>
</dbReference>
<dbReference type="InterPro" id="IPR036410">
    <property type="entry name" value="HSP_DnaJ_Cys-rich_dom_sf"/>
</dbReference>
<dbReference type="InterPro" id="IPR036869">
    <property type="entry name" value="J_dom_sf"/>
</dbReference>
<dbReference type="NCBIfam" id="TIGR02349">
    <property type="entry name" value="DnaJ_bact"/>
    <property type="match status" value="1"/>
</dbReference>
<dbReference type="NCBIfam" id="NF008035">
    <property type="entry name" value="PRK10767.1"/>
    <property type="match status" value="1"/>
</dbReference>
<dbReference type="PANTHER" id="PTHR43096:SF48">
    <property type="entry name" value="CHAPERONE PROTEIN DNAJ"/>
    <property type="match status" value="1"/>
</dbReference>
<dbReference type="PANTHER" id="PTHR43096">
    <property type="entry name" value="DNAJ HOMOLOG 1, MITOCHONDRIAL-RELATED"/>
    <property type="match status" value="1"/>
</dbReference>
<dbReference type="Pfam" id="PF00226">
    <property type="entry name" value="DnaJ"/>
    <property type="match status" value="1"/>
</dbReference>
<dbReference type="Pfam" id="PF01556">
    <property type="entry name" value="DnaJ_C"/>
    <property type="match status" value="1"/>
</dbReference>
<dbReference type="Pfam" id="PF00684">
    <property type="entry name" value="DnaJ_CXXCXGXG"/>
    <property type="match status" value="1"/>
</dbReference>
<dbReference type="PRINTS" id="PR00625">
    <property type="entry name" value="JDOMAIN"/>
</dbReference>
<dbReference type="SMART" id="SM00271">
    <property type="entry name" value="DnaJ"/>
    <property type="match status" value="1"/>
</dbReference>
<dbReference type="SUPFAM" id="SSF46565">
    <property type="entry name" value="Chaperone J-domain"/>
    <property type="match status" value="1"/>
</dbReference>
<dbReference type="SUPFAM" id="SSF57938">
    <property type="entry name" value="DnaJ/Hsp40 cysteine-rich domain"/>
    <property type="match status" value="1"/>
</dbReference>
<dbReference type="SUPFAM" id="SSF49493">
    <property type="entry name" value="HSP40/DnaJ peptide-binding domain"/>
    <property type="match status" value="2"/>
</dbReference>
<dbReference type="PROSITE" id="PS00636">
    <property type="entry name" value="DNAJ_1"/>
    <property type="match status" value="1"/>
</dbReference>
<dbReference type="PROSITE" id="PS50076">
    <property type="entry name" value="DNAJ_2"/>
    <property type="match status" value="1"/>
</dbReference>
<dbReference type="PROSITE" id="PS51188">
    <property type="entry name" value="ZF_CR"/>
    <property type="match status" value="1"/>
</dbReference>
<comment type="function">
    <text evidence="1">Participates actively in the response to hyperosmotic and heat shock by preventing the aggregation of stress-denatured proteins and by disaggregating proteins, also in an autonomous, DnaK-independent fashion. Unfolded proteins bind initially to DnaJ; upon interaction with the DnaJ-bound protein, DnaK hydrolyzes its bound ATP, resulting in the formation of a stable complex. GrpE releases ADP from DnaK; ATP binding to DnaK triggers the release of the substrate protein, thus completing the reaction cycle. Several rounds of ATP-dependent interactions between DnaJ, DnaK and GrpE are required for fully efficient folding. Also involved, together with DnaK and GrpE, in the DNA replication of plasmids through activation of initiation proteins.</text>
</comment>
<comment type="cofactor">
    <cofactor evidence="1">
        <name>Zn(2+)</name>
        <dbReference type="ChEBI" id="CHEBI:29105"/>
    </cofactor>
    <text evidence="1">Binds 2 Zn(2+) ions per monomer.</text>
</comment>
<comment type="subunit">
    <text evidence="1">Homodimer.</text>
</comment>
<comment type="subcellular location">
    <subcellularLocation>
        <location evidence="1">Cytoplasm</location>
    </subcellularLocation>
</comment>
<comment type="domain">
    <text evidence="1">The J domain is necessary and sufficient to stimulate DnaK ATPase activity. Zinc center 1 plays an important role in the autonomous, DnaK-independent chaperone activity of DnaJ. Zinc center 2 is essential for interaction with DnaK and for DnaJ activity.</text>
</comment>
<comment type="similarity">
    <text evidence="1">Belongs to the DnaJ family.</text>
</comment>
<name>DNAJ_PSET1</name>
<keyword id="KW-0143">Chaperone</keyword>
<keyword id="KW-0963">Cytoplasm</keyword>
<keyword id="KW-0235">DNA replication</keyword>
<keyword id="KW-0479">Metal-binding</keyword>
<keyword id="KW-1185">Reference proteome</keyword>
<keyword id="KW-0677">Repeat</keyword>
<keyword id="KW-0346">Stress response</keyword>
<keyword id="KW-0862">Zinc</keyword>
<keyword id="KW-0863">Zinc-finger</keyword>
<sequence>MSKRDYYEVLGVSKDASERDIKKAYKRLAMKYHPDRTSGDKELETKFKEVKEAYEILTDAQKRQTYDQYGHAAFEQGGGGGGHGGFGGGHGDFGDVFGDVFGDIFGGGGGRRQSRQQRGSDLRYNMDLSLEEAVRGKEVEIKIPTWVGCDPCDGSGAKAGSKPKTCTTCHGAGQVQMRQGFFAVQQTCPTCQGQGQIISNPCDSCHGQGRVEKTKTLSVKIPAGVDTGDRIRLTGEGEAGMHGAPSGDLYVQVSVREHRIFVRDANNLHCEVPISFTTAGLGGEIEVPTLDGRAKLKIPSETQTGKMFRMRGKGVKSVRSGAIGDLICKVVIETPINLNERQRELLEELEESMGKDSSKNRPKEQGFFDGVKKFFDDLTK</sequence>
<evidence type="ECO:0000255" key="1">
    <source>
        <dbReference type="HAMAP-Rule" id="MF_01152"/>
    </source>
</evidence>